<sequence length="433" mass="46561">MANILIQGATVLTMEGPDGVYRDGEIAIAGNSILSVGPRGSVPEGFRPGRSIDGTGMVAMPGFVNCHTHAAMTLLRSYADDMPLMKWLSEKIWPVEERLQPEDIYWGTMLCCLEMIKSGTTTFADMYFSMERVAAAVEESGMRACLSRGMIGVGSGARKAIDESLSFVREWNGGADGRITAMFGPHAPYTCPPEYLKKVVDLAAREGAGIHIHVAETRDEIEQIRAGYGTTPVRYLDAAGVFELPVLAAHCVHLDEGDIEILSAKRVGIAHCPESNMKLASGIAPVTELLQAGAAVGLGTDGAASNNNLDMLEEMRSASLLHKVSTGDPLALPSFEALRMATAGGALALGLKDVGLLKPGMKADLILVDFRRPHLCPQHDLIAHLVYAAQSADVDTVIINGKVVMEKRQVLNLDEEKIMAEAQKRALRLVNRE</sequence>
<keyword id="KW-0378">Hydrolase</keyword>
<keyword id="KW-0479">Metal-binding</keyword>
<keyword id="KW-1185">Reference proteome</keyword>
<keyword id="KW-0862">Zinc</keyword>
<organism>
    <name type="scientific">Pelotomaculum thermopropionicum (strain DSM 13744 / JCM 10971 / SI)</name>
    <dbReference type="NCBI Taxonomy" id="370438"/>
    <lineage>
        <taxon>Bacteria</taxon>
        <taxon>Bacillati</taxon>
        <taxon>Bacillota</taxon>
        <taxon>Clostridia</taxon>
        <taxon>Eubacteriales</taxon>
        <taxon>Desulfotomaculaceae</taxon>
        <taxon>Pelotomaculum</taxon>
    </lineage>
</organism>
<reference key="1">
    <citation type="journal article" date="2008" name="Genome Res.">
        <title>The genome of Pelotomaculum thermopropionicum reveals niche-associated evolution in anaerobic microbiota.</title>
        <authorList>
            <person name="Kosaka T."/>
            <person name="Kato S."/>
            <person name="Shimoyama T."/>
            <person name="Ishii S."/>
            <person name="Abe T."/>
            <person name="Watanabe K."/>
        </authorList>
    </citation>
    <scope>NUCLEOTIDE SEQUENCE [LARGE SCALE GENOMIC DNA]</scope>
    <source>
        <strain>DSM 13744 / JCM 10971 / SI</strain>
    </source>
</reference>
<name>MTAD_PELTS</name>
<evidence type="ECO:0000255" key="1">
    <source>
        <dbReference type="HAMAP-Rule" id="MF_01281"/>
    </source>
</evidence>
<comment type="function">
    <text evidence="1">Catalyzes the deamination of 5-methylthioadenosine and S-adenosyl-L-homocysteine into 5-methylthioinosine and S-inosyl-L-homocysteine, respectively. Is also able to deaminate adenosine.</text>
</comment>
<comment type="catalytic activity">
    <reaction evidence="1">
        <text>S-adenosyl-L-homocysteine + H2O + H(+) = S-inosyl-L-homocysteine + NH4(+)</text>
        <dbReference type="Rhea" id="RHEA:20716"/>
        <dbReference type="ChEBI" id="CHEBI:15377"/>
        <dbReference type="ChEBI" id="CHEBI:15378"/>
        <dbReference type="ChEBI" id="CHEBI:28938"/>
        <dbReference type="ChEBI" id="CHEBI:57856"/>
        <dbReference type="ChEBI" id="CHEBI:57985"/>
        <dbReference type="EC" id="3.5.4.28"/>
    </reaction>
</comment>
<comment type="catalytic activity">
    <reaction evidence="1">
        <text>S-methyl-5'-thioadenosine + H2O + H(+) = S-methyl-5'-thioinosine + NH4(+)</text>
        <dbReference type="Rhea" id="RHEA:25025"/>
        <dbReference type="ChEBI" id="CHEBI:15377"/>
        <dbReference type="ChEBI" id="CHEBI:15378"/>
        <dbReference type="ChEBI" id="CHEBI:17509"/>
        <dbReference type="ChEBI" id="CHEBI:28938"/>
        <dbReference type="ChEBI" id="CHEBI:48595"/>
        <dbReference type="EC" id="3.5.4.31"/>
    </reaction>
</comment>
<comment type="cofactor">
    <cofactor evidence="1">
        <name>Zn(2+)</name>
        <dbReference type="ChEBI" id="CHEBI:29105"/>
    </cofactor>
    <text evidence="1">Binds 1 zinc ion per subunit.</text>
</comment>
<comment type="similarity">
    <text evidence="1">Belongs to the metallo-dependent hydrolases superfamily. MTA/SAH deaminase family.</text>
</comment>
<feature type="chain" id="PRO_1000085895" description="5-methylthioadenosine/S-adenosylhomocysteine deaminase">
    <location>
        <begin position="1"/>
        <end position="433"/>
    </location>
</feature>
<feature type="binding site" evidence="1">
    <location>
        <position position="67"/>
    </location>
    <ligand>
        <name>Zn(2+)</name>
        <dbReference type="ChEBI" id="CHEBI:29105"/>
    </ligand>
</feature>
<feature type="binding site" evidence="1">
    <location>
        <position position="69"/>
    </location>
    <ligand>
        <name>Zn(2+)</name>
        <dbReference type="ChEBI" id="CHEBI:29105"/>
    </ligand>
</feature>
<feature type="binding site" evidence="1">
    <location>
        <position position="96"/>
    </location>
    <ligand>
        <name>substrate</name>
    </ligand>
</feature>
<feature type="binding site" evidence="1">
    <location>
        <position position="148"/>
    </location>
    <ligand>
        <name>substrate</name>
    </ligand>
</feature>
<feature type="binding site" evidence="1">
    <location>
        <position position="158"/>
    </location>
    <ligand>
        <name>substrate</name>
    </ligand>
</feature>
<feature type="binding site" evidence="1">
    <location>
        <position position="186"/>
    </location>
    <ligand>
        <name>substrate</name>
    </ligand>
</feature>
<feature type="binding site" evidence="1">
    <location>
        <position position="213"/>
    </location>
    <ligand>
        <name>Zn(2+)</name>
        <dbReference type="ChEBI" id="CHEBI:29105"/>
    </ligand>
</feature>
<feature type="binding site" evidence="1">
    <location>
        <position position="216"/>
    </location>
    <ligand>
        <name>substrate</name>
    </ligand>
</feature>
<feature type="binding site" evidence="1">
    <location>
        <position position="301"/>
    </location>
    <ligand>
        <name>substrate</name>
    </ligand>
</feature>
<feature type="binding site" evidence="1">
    <location>
        <position position="301"/>
    </location>
    <ligand>
        <name>Zn(2+)</name>
        <dbReference type="ChEBI" id="CHEBI:29105"/>
    </ligand>
</feature>
<gene>
    <name evidence="1" type="primary">mtaD</name>
    <name type="ordered locus">PTH_1728</name>
</gene>
<protein>
    <recommendedName>
        <fullName evidence="1">5-methylthioadenosine/S-adenosylhomocysteine deaminase</fullName>
        <shortName evidence="1">MTA/SAH deaminase</shortName>
        <ecNumber evidence="1">3.5.4.28</ecNumber>
        <ecNumber evidence="1">3.5.4.31</ecNumber>
    </recommendedName>
</protein>
<dbReference type="EC" id="3.5.4.28" evidence="1"/>
<dbReference type="EC" id="3.5.4.31" evidence="1"/>
<dbReference type="EMBL" id="AP009389">
    <property type="protein sequence ID" value="BAF59909.1"/>
    <property type="molecule type" value="Genomic_DNA"/>
</dbReference>
<dbReference type="SMR" id="A5D1G6"/>
<dbReference type="STRING" id="370438.PTH_1728"/>
<dbReference type="KEGG" id="pth:PTH_1728"/>
<dbReference type="eggNOG" id="COG0402">
    <property type="taxonomic scope" value="Bacteria"/>
</dbReference>
<dbReference type="HOGENOM" id="CLU_012358_2_1_9"/>
<dbReference type="Proteomes" id="UP000006556">
    <property type="component" value="Chromosome"/>
</dbReference>
<dbReference type="GO" id="GO:0090614">
    <property type="term" value="F:5'-methylthioadenosine deaminase activity"/>
    <property type="evidence" value="ECO:0007669"/>
    <property type="project" value="UniProtKB-UniRule"/>
</dbReference>
<dbReference type="GO" id="GO:0046872">
    <property type="term" value="F:metal ion binding"/>
    <property type="evidence" value="ECO:0007669"/>
    <property type="project" value="UniProtKB-KW"/>
</dbReference>
<dbReference type="GO" id="GO:0050270">
    <property type="term" value="F:S-adenosylhomocysteine deaminase activity"/>
    <property type="evidence" value="ECO:0007669"/>
    <property type="project" value="UniProtKB-UniRule"/>
</dbReference>
<dbReference type="CDD" id="cd01298">
    <property type="entry name" value="ATZ_TRZ_like"/>
    <property type="match status" value="1"/>
</dbReference>
<dbReference type="FunFam" id="3.20.20.140:FF:000014">
    <property type="entry name" value="5-methylthioadenosine/S-adenosylhomocysteine deaminase"/>
    <property type="match status" value="1"/>
</dbReference>
<dbReference type="Gene3D" id="3.20.20.140">
    <property type="entry name" value="Metal-dependent hydrolases"/>
    <property type="match status" value="1"/>
</dbReference>
<dbReference type="Gene3D" id="2.30.40.10">
    <property type="entry name" value="Urease, subunit C, domain 1"/>
    <property type="match status" value="1"/>
</dbReference>
<dbReference type="HAMAP" id="MF_01281">
    <property type="entry name" value="MTA_SAH_deamin"/>
    <property type="match status" value="1"/>
</dbReference>
<dbReference type="InterPro" id="IPR006680">
    <property type="entry name" value="Amidohydro-rel"/>
</dbReference>
<dbReference type="InterPro" id="IPR023512">
    <property type="entry name" value="Deaminase_MtaD/DadD"/>
</dbReference>
<dbReference type="InterPro" id="IPR011059">
    <property type="entry name" value="Metal-dep_hydrolase_composite"/>
</dbReference>
<dbReference type="InterPro" id="IPR032466">
    <property type="entry name" value="Metal_Hydrolase"/>
</dbReference>
<dbReference type="InterPro" id="IPR050287">
    <property type="entry name" value="MTA/SAH_deaminase"/>
</dbReference>
<dbReference type="PANTHER" id="PTHR43794:SF11">
    <property type="entry name" value="AMIDOHYDROLASE-RELATED DOMAIN-CONTAINING PROTEIN"/>
    <property type="match status" value="1"/>
</dbReference>
<dbReference type="PANTHER" id="PTHR43794">
    <property type="entry name" value="AMINOHYDROLASE SSNA-RELATED"/>
    <property type="match status" value="1"/>
</dbReference>
<dbReference type="Pfam" id="PF01979">
    <property type="entry name" value="Amidohydro_1"/>
    <property type="match status" value="1"/>
</dbReference>
<dbReference type="SUPFAM" id="SSF51338">
    <property type="entry name" value="Composite domain of metallo-dependent hydrolases"/>
    <property type="match status" value="1"/>
</dbReference>
<dbReference type="SUPFAM" id="SSF51556">
    <property type="entry name" value="Metallo-dependent hydrolases"/>
    <property type="match status" value="1"/>
</dbReference>
<proteinExistence type="inferred from homology"/>
<accession>A5D1G6</accession>